<reference key="1">
    <citation type="journal article" date="2003" name="Nucleic Acids Res.">
        <title>The complete genome sequence and analysis of Corynebacterium diphtheriae NCTC13129.</title>
        <authorList>
            <person name="Cerdeno-Tarraga A.-M."/>
            <person name="Efstratiou A."/>
            <person name="Dover L.G."/>
            <person name="Holden M.T.G."/>
            <person name="Pallen M.J."/>
            <person name="Bentley S.D."/>
            <person name="Besra G.S."/>
            <person name="Churcher C.M."/>
            <person name="James K.D."/>
            <person name="De Zoysa A."/>
            <person name="Chillingworth T."/>
            <person name="Cronin A."/>
            <person name="Dowd L."/>
            <person name="Feltwell T."/>
            <person name="Hamlin N."/>
            <person name="Holroyd S."/>
            <person name="Jagels K."/>
            <person name="Moule S."/>
            <person name="Quail M.A."/>
            <person name="Rabbinowitsch E."/>
            <person name="Rutherford K.M."/>
            <person name="Thomson N.R."/>
            <person name="Unwin L."/>
            <person name="Whitehead S."/>
            <person name="Barrell B.G."/>
            <person name="Parkhill J."/>
        </authorList>
    </citation>
    <scope>NUCLEOTIDE SEQUENCE [LARGE SCALE GENOMIC DNA]</scope>
    <source>
        <strain>ATCC 700971 / NCTC 13129 / Biotype gravis</strain>
    </source>
</reference>
<organism>
    <name type="scientific">Corynebacterium diphtheriae (strain ATCC 700971 / NCTC 13129 / Biotype gravis)</name>
    <dbReference type="NCBI Taxonomy" id="257309"/>
    <lineage>
        <taxon>Bacteria</taxon>
        <taxon>Bacillati</taxon>
        <taxon>Actinomycetota</taxon>
        <taxon>Actinomycetes</taxon>
        <taxon>Mycobacteriales</taxon>
        <taxon>Corynebacteriaceae</taxon>
        <taxon>Corynebacterium</taxon>
    </lineage>
</organism>
<proteinExistence type="inferred from homology"/>
<comment type="function">
    <text evidence="1">Forms oxaloacetate, a four-carbon dicarboxylic acid source for the tricarboxylic acid cycle.</text>
</comment>
<comment type="catalytic activity">
    <reaction evidence="1">
        <text>oxaloacetate + phosphate = phosphoenolpyruvate + hydrogencarbonate</text>
        <dbReference type="Rhea" id="RHEA:28370"/>
        <dbReference type="ChEBI" id="CHEBI:16452"/>
        <dbReference type="ChEBI" id="CHEBI:17544"/>
        <dbReference type="ChEBI" id="CHEBI:43474"/>
        <dbReference type="ChEBI" id="CHEBI:58702"/>
        <dbReference type="EC" id="4.1.1.31"/>
    </reaction>
</comment>
<comment type="cofactor">
    <cofactor evidence="1">
        <name>Mg(2+)</name>
        <dbReference type="ChEBI" id="CHEBI:18420"/>
    </cofactor>
</comment>
<comment type="similarity">
    <text evidence="1">Belongs to the PEPCase type 1 family.</text>
</comment>
<name>CAPP_CORDI</name>
<feature type="chain" id="PRO_0000166589" description="Phosphoenolpyruvate carboxylase">
    <location>
        <begin position="1"/>
        <end position="902"/>
    </location>
</feature>
<feature type="region of interest" description="Disordered" evidence="2">
    <location>
        <begin position="327"/>
        <end position="346"/>
    </location>
</feature>
<feature type="active site" evidence="1">
    <location>
        <position position="132"/>
    </location>
</feature>
<feature type="active site" evidence="1">
    <location>
        <position position="561"/>
    </location>
</feature>
<dbReference type="EC" id="4.1.1.31" evidence="1"/>
<dbReference type="EMBL" id="BX248357">
    <property type="protein sequence ID" value="CAE49642.1"/>
    <property type="molecule type" value="Genomic_DNA"/>
</dbReference>
<dbReference type="SMR" id="P61448"/>
<dbReference type="STRING" id="257309.DIP1122"/>
<dbReference type="KEGG" id="cdi:DIP1122"/>
<dbReference type="HOGENOM" id="CLU_006557_2_0_11"/>
<dbReference type="Proteomes" id="UP000002198">
    <property type="component" value="Chromosome"/>
</dbReference>
<dbReference type="GO" id="GO:0005829">
    <property type="term" value="C:cytosol"/>
    <property type="evidence" value="ECO:0007669"/>
    <property type="project" value="TreeGrafter"/>
</dbReference>
<dbReference type="GO" id="GO:0000287">
    <property type="term" value="F:magnesium ion binding"/>
    <property type="evidence" value="ECO:0007669"/>
    <property type="project" value="UniProtKB-UniRule"/>
</dbReference>
<dbReference type="GO" id="GO:0008964">
    <property type="term" value="F:phosphoenolpyruvate carboxylase activity"/>
    <property type="evidence" value="ECO:0007669"/>
    <property type="project" value="UniProtKB-UniRule"/>
</dbReference>
<dbReference type="GO" id="GO:0015977">
    <property type="term" value="P:carbon fixation"/>
    <property type="evidence" value="ECO:0007669"/>
    <property type="project" value="UniProtKB-UniRule"/>
</dbReference>
<dbReference type="GO" id="GO:0006107">
    <property type="term" value="P:oxaloacetate metabolic process"/>
    <property type="evidence" value="ECO:0007669"/>
    <property type="project" value="UniProtKB-UniRule"/>
</dbReference>
<dbReference type="GO" id="GO:0006099">
    <property type="term" value="P:tricarboxylic acid cycle"/>
    <property type="evidence" value="ECO:0007669"/>
    <property type="project" value="InterPro"/>
</dbReference>
<dbReference type="Gene3D" id="1.20.1440.90">
    <property type="entry name" value="Phosphoenolpyruvate/pyruvate domain"/>
    <property type="match status" value="1"/>
</dbReference>
<dbReference type="HAMAP" id="MF_00595">
    <property type="entry name" value="PEPcase_type1"/>
    <property type="match status" value="1"/>
</dbReference>
<dbReference type="InterPro" id="IPR021135">
    <property type="entry name" value="PEP_COase"/>
</dbReference>
<dbReference type="InterPro" id="IPR022805">
    <property type="entry name" value="PEP_COase_bac/pln-type"/>
</dbReference>
<dbReference type="InterPro" id="IPR018129">
    <property type="entry name" value="PEP_COase_Lys_AS"/>
</dbReference>
<dbReference type="InterPro" id="IPR033129">
    <property type="entry name" value="PEPCASE_His_AS"/>
</dbReference>
<dbReference type="InterPro" id="IPR015813">
    <property type="entry name" value="Pyrv/PenolPyrv_kinase-like_dom"/>
</dbReference>
<dbReference type="NCBIfam" id="NF000584">
    <property type="entry name" value="PRK00009.1"/>
    <property type="match status" value="1"/>
</dbReference>
<dbReference type="PANTHER" id="PTHR30523">
    <property type="entry name" value="PHOSPHOENOLPYRUVATE CARBOXYLASE"/>
    <property type="match status" value="1"/>
</dbReference>
<dbReference type="PANTHER" id="PTHR30523:SF6">
    <property type="entry name" value="PHOSPHOENOLPYRUVATE CARBOXYLASE"/>
    <property type="match status" value="1"/>
</dbReference>
<dbReference type="Pfam" id="PF00311">
    <property type="entry name" value="PEPcase"/>
    <property type="match status" value="1"/>
</dbReference>
<dbReference type="PRINTS" id="PR00150">
    <property type="entry name" value="PEPCARBXLASE"/>
</dbReference>
<dbReference type="SUPFAM" id="SSF51621">
    <property type="entry name" value="Phosphoenolpyruvate/pyruvate domain"/>
    <property type="match status" value="1"/>
</dbReference>
<dbReference type="PROSITE" id="PS00781">
    <property type="entry name" value="PEPCASE_1"/>
    <property type="match status" value="1"/>
</dbReference>
<dbReference type="PROSITE" id="PS00393">
    <property type="entry name" value="PEPCASE_2"/>
    <property type="match status" value="1"/>
</dbReference>
<gene>
    <name evidence="1" type="primary">ppc</name>
    <name type="ordered locus">DIP1122</name>
</gene>
<keyword id="KW-0120">Carbon dioxide fixation</keyword>
<keyword id="KW-0456">Lyase</keyword>
<keyword id="KW-0460">Magnesium</keyword>
<keyword id="KW-1185">Reference proteome</keyword>
<sequence>MTAAISDRVREDIRLLGRVLGRVIAQQEGEEVYELVEATRRMAFDVSHGDADPEDLMVIFRDLDITKTNLVARAFSYFALLANLVEDLDDESVEADVSLRKTFAKLKREGVSAADAASVIRSAEVAPVLTAHPTETRRRTVFDTQTRIKQLLKDAHHGGDMQVIEQEMYLRMTLLWQTALIRIARPTLEDEIDVGLRYYKKSLLEQVPALNRSIRHSMRETFGLQLPDIAVMRPGSWIGGDHDGNPYVNARTLTYATRQAAKTVARYYVEQLGELERELSLSDRYSSCSKELLALAEASGNNWESRVDEPYRRAVYGMRARMKSNVDALERPEKTAGKKSSKRTPYATPEEFLRDLDVIDRSLRAHNDDVIADDRLARIRSAVTTFGFHLYTLDIRQNSESFEAVIEEVFAAARRVPGGKRYSELAEAEKVELLIQELQTPRPLLFPGALEVEDAFSADTTKELGIFLAAAQAVRDFGSRSIAHCIISMTATVSDILEPMVLLKEVGLRDVDVVPLFETIDDLRCGAAILRELWSHPFYREHLRARGDIQEVMLGYSDSNKDGGYLQANWALYDAELGLVELCREHNIELRLAHGRGGAVGRGGGPTYDAILAQPKGAVSGSVRITEQGEVISAKYGAPETARRHLEAFVSGALEASLLDTEPIADPDRAYAIMRDLAGFSGQRYQELVGDPGFIEYFTQSTPLHEIGELNLGSRPAARKQTTAISDLRAIPWVLSWSQSRTNIPGWFGVGSAVSRFVSAVPEKDRESRWQELRDLYATWPFFRSVMSNMAQVMAKAEISLARLYADLVDDPEVADRIYALIAEEFELTRRAYLAITGNEALVSENQRQARSLKRRYPYLLPLNAIQLELLRRYRGGDDQFLVSKTIQVTMNGLATALRNAG</sequence>
<protein>
    <recommendedName>
        <fullName evidence="1">Phosphoenolpyruvate carboxylase</fullName>
        <shortName evidence="1">PEPC</shortName>
        <shortName evidence="1">PEPCase</shortName>
        <ecNumber evidence="1">4.1.1.31</ecNumber>
    </recommendedName>
</protein>
<evidence type="ECO:0000255" key="1">
    <source>
        <dbReference type="HAMAP-Rule" id="MF_00595"/>
    </source>
</evidence>
<evidence type="ECO:0000256" key="2">
    <source>
        <dbReference type="SAM" id="MobiDB-lite"/>
    </source>
</evidence>
<accession>P61448</accession>